<accession>Q2FG54</accession>
<organism>
    <name type="scientific">Staphylococcus aureus (strain USA300)</name>
    <dbReference type="NCBI Taxonomy" id="367830"/>
    <lineage>
        <taxon>Bacteria</taxon>
        <taxon>Bacillati</taxon>
        <taxon>Bacillota</taxon>
        <taxon>Bacilli</taxon>
        <taxon>Bacillales</taxon>
        <taxon>Staphylococcaceae</taxon>
        <taxon>Staphylococcus</taxon>
    </lineage>
</organism>
<name>SYT_STAA3</name>
<reference key="1">
    <citation type="journal article" date="2006" name="Lancet">
        <title>Complete genome sequence of USA300, an epidemic clone of community-acquired meticillin-resistant Staphylococcus aureus.</title>
        <authorList>
            <person name="Diep B.A."/>
            <person name="Gill S.R."/>
            <person name="Chang R.F."/>
            <person name="Phan T.H."/>
            <person name="Chen J.H."/>
            <person name="Davidson M.G."/>
            <person name="Lin F."/>
            <person name="Lin J."/>
            <person name="Carleton H.A."/>
            <person name="Mongodin E.F."/>
            <person name="Sensabaugh G.F."/>
            <person name="Perdreau-Remington F."/>
        </authorList>
    </citation>
    <scope>NUCLEOTIDE SEQUENCE [LARGE SCALE GENOMIC DNA]</scope>
    <source>
        <strain>USA300</strain>
    </source>
</reference>
<gene>
    <name evidence="1" type="primary">thrS</name>
    <name type="ordered locus">SAUSA300_1629</name>
</gene>
<protein>
    <recommendedName>
        <fullName evidence="1">Threonine--tRNA ligase</fullName>
        <ecNumber evidence="1">6.1.1.3</ecNumber>
    </recommendedName>
    <alternativeName>
        <fullName evidence="1">Threonyl-tRNA synthetase</fullName>
        <shortName evidence="1">ThrRS</shortName>
    </alternativeName>
</protein>
<proteinExistence type="inferred from homology"/>
<dbReference type="EC" id="6.1.1.3" evidence="1"/>
<dbReference type="EMBL" id="CP000255">
    <property type="protein sequence ID" value="ABD21855.1"/>
    <property type="molecule type" value="Genomic_DNA"/>
</dbReference>
<dbReference type="RefSeq" id="WP_000435132.1">
    <property type="nucleotide sequence ID" value="NZ_CP027476.1"/>
</dbReference>
<dbReference type="SMR" id="Q2FG54"/>
<dbReference type="KEGG" id="saa:SAUSA300_1629"/>
<dbReference type="HOGENOM" id="CLU_008554_0_1_9"/>
<dbReference type="OMA" id="WYADGMY"/>
<dbReference type="Proteomes" id="UP000001939">
    <property type="component" value="Chromosome"/>
</dbReference>
<dbReference type="GO" id="GO:0005737">
    <property type="term" value="C:cytoplasm"/>
    <property type="evidence" value="ECO:0007669"/>
    <property type="project" value="UniProtKB-SubCell"/>
</dbReference>
<dbReference type="GO" id="GO:0005524">
    <property type="term" value="F:ATP binding"/>
    <property type="evidence" value="ECO:0007669"/>
    <property type="project" value="UniProtKB-UniRule"/>
</dbReference>
<dbReference type="GO" id="GO:0140096">
    <property type="term" value="F:catalytic activity, acting on a protein"/>
    <property type="evidence" value="ECO:0007669"/>
    <property type="project" value="UniProtKB-ARBA"/>
</dbReference>
<dbReference type="GO" id="GO:0046872">
    <property type="term" value="F:metal ion binding"/>
    <property type="evidence" value="ECO:0007669"/>
    <property type="project" value="UniProtKB-KW"/>
</dbReference>
<dbReference type="GO" id="GO:0004829">
    <property type="term" value="F:threonine-tRNA ligase activity"/>
    <property type="evidence" value="ECO:0007669"/>
    <property type="project" value="UniProtKB-UniRule"/>
</dbReference>
<dbReference type="GO" id="GO:0016740">
    <property type="term" value="F:transferase activity"/>
    <property type="evidence" value="ECO:0007669"/>
    <property type="project" value="UniProtKB-ARBA"/>
</dbReference>
<dbReference type="GO" id="GO:0000049">
    <property type="term" value="F:tRNA binding"/>
    <property type="evidence" value="ECO:0007669"/>
    <property type="project" value="UniProtKB-KW"/>
</dbReference>
<dbReference type="GO" id="GO:0006435">
    <property type="term" value="P:threonyl-tRNA aminoacylation"/>
    <property type="evidence" value="ECO:0007669"/>
    <property type="project" value="UniProtKB-UniRule"/>
</dbReference>
<dbReference type="CDD" id="cd01667">
    <property type="entry name" value="TGS_ThrRS"/>
    <property type="match status" value="1"/>
</dbReference>
<dbReference type="CDD" id="cd00860">
    <property type="entry name" value="ThrRS_anticodon"/>
    <property type="match status" value="1"/>
</dbReference>
<dbReference type="CDD" id="cd00771">
    <property type="entry name" value="ThrRS_core"/>
    <property type="match status" value="1"/>
</dbReference>
<dbReference type="FunFam" id="3.10.20.30:FF:000005">
    <property type="entry name" value="Threonine--tRNA ligase"/>
    <property type="match status" value="1"/>
</dbReference>
<dbReference type="FunFam" id="3.30.54.20:FF:000002">
    <property type="entry name" value="Threonine--tRNA ligase"/>
    <property type="match status" value="1"/>
</dbReference>
<dbReference type="FunFam" id="3.30.930.10:FF:000002">
    <property type="entry name" value="Threonine--tRNA ligase"/>
    <property type="match status" value="1"/>
</dbReference>
<dbReference type="FunFam" id="3.40.50.800:FF:000001">
    <property type="entry name" value="Threonine--tRNA ligase"/>
    <property type="match status" value="1"/>
</dbReference>
<dbReference type="FunFam" id="3.30.980.10:FF:000005">
    <property type="entry name" value="Threonyl-tRNA synthetase, mitochondrial"/>
    <property type="match status" value="1"/>
</dbReference>
<dbReference type="Gene3D" id="3.10.20.30">
    <property type="match status" value="1"/>
</dbReference>
<dbReference type="Gene3D" id="3.30.54.20">
    <property type="match status" value="1"/>
</dbReference>
<dbReference type="Gene3D" id="3.40.50.800">
    <property type="entry name" value="Anticodon-binding domain"/>
    <property type="match status" value="1"/>
</dbReference>
<dbReference type="Gene3D" id="3.30.930.10">
    <property type="entry name" value="Bira Bifunctional Protein, Domain 2"/>
    <property type="match status" value="1"/>
</dbReference>
<dbReference type="Gene3D" id="3.30.980.10">
    <property type="entry name" value="Threonyl-trna Synthetase, Chain A, domain 2"/>
    <property type="match status" value="1"/>
</dbReference>
<dbReference type="HAMAP" id="MF_00184">
    <property type="entry name" value="Thr_tRNA_synth"/>
    <property type="match status" value="1"/>
</dbReference>
<dbReference type="InterPro" id="IPR002314">
    <property type="entry name" value="aa-tRNA-synt_IIb"/>
</dbReference>
<dbReference type="InterPro" id="IPR006195">
    <property type="entry name" value="aa-tRNA-synth_II"/>
</dbReference>
<dbReference type="InterPro" id="IPR045864">
    <property type="entry name" value="aa-tRNA-synth_II/BPL/LPL"/>
</dbReference>
<dbReference type="InterPro" id="IPR004154">
    <property type="entry name" value="Anticodon-bd"/>
</dbReference>
<dbReference type="InterPro" id="IPR036621">
    <property type="entry name" value="Anticodon-bd_dom_sf"/>
</dbReference>
<dbReference type="InterPro" id="IPR012675">
    <property type="entry name" value="Beta-grasp_dom_sf"/>
</dbReference>
<dbReference type="InterPro" id="IPR004095">
    <property type="entry name" value="TGS"/>
</dbReference>
<dbReference type="InterPro" id="IPR012676">
    <property type="entry name" value="TGS-like"/>
</dbReference>
<dbReference type="InterPro" id="IPR002320">
    <property type="entry name" value="Thr-tRNA-ligase_IIa"/>
</dbReference>
<dbReference type="InterPro" id="IPR018163">
    <property type="entry name" value="Thr/Ala-tRNA-synth_IIc_edit"/>
</dbReference>
<dbReference type="InterPro" id="IPR047246">
    <property type="entry name" value="ThrRS_anticodon"/>
</dbReference>
<dbReference type="InterPro" id="IPR033728">
    <property type="entry name" value="ThrRS_core"/>
</dbReference>
<dbReference type="InterPro" id="IPR012947">
    <property type="entry name" value="tRNA_SAD"/>
</dbReference>
<dbReference type="NCBIfam" id="TIGR00418">
    <property type="entry name" value="thrS"/>
    <property type="match status" value="1"/>
</dbReference>
<dbReference type="PANTHER" id="PTHR11451:SF56">
    <property type="entry name" value="THREONINE--TRNA LIGASE 1"/>
    <property type="match status" value="1"/>
</dbReference>
<dbReference type="PANTHER" id="PTHR11451">
    <property type="entry name" value="THREONINE-TRNA LIGASE"/>
    <property type="match status" value="1"/>
</dbReference>
<dbReference type="Pfam" id="PF03129">
    <property type="entry name" value="HGTP_anticodon"/>
    <property type="match status" value="1"/>
</dbReference>
<dbReference type="Pfam" id="PF02824">
    <property type="entry name" value="TGS"/>
    <property type="match status" value="1"/>
</dbReference>
<dbReference type="Pfam" id="PF00587">
    <property type="entry name" value="tRNA-synt_2b"/>
    <property type="match status" value="1"/>
</dbReference>
<dbReference type="Pfam" id="PF07973">
    <property type="entry name" value="tRNA_SAD"/>
    <property type="match status" value="1"/>
</dbReference>
<dbReference type="PRINTS" id="PR01047">
    <property type="entry name" value="TRNASYNTHTHR"/>
</dbReference>
<dbReference type="SMART" id="SM00863">
    <property type="entry name" value="tRNA_SAD"/>
    <property type="match status" value="1"/>
</dbReference>
<dbReference type="SUPFAM" id="SSF52954">
    <property type="entry name" value="Class II aaRS ABD-related"/>
    <property type="match status" value="1"/>
</dbReference>
<dbReference type="SUPFAM" id="SSF55681">
    <property type="entry name" value="Class II aaRS and biotin synthetases"/>
    <property type="match status" value="1"/>
</dbReference>
<dbReference type="SUPFAM" id="SSF81271">
    <property type="entry name" value="TGS-like"/>
    <property type="match status" value="1"/>
</dbReference>
<dbReference type="SUPFAM" id="SSF55186">
    <property type="entry name" value="ThrRS/AlaRS common domain"/>
    <property type="match status" value="1"/>
</dbReference>
<dbReference type="PROSITE" id="PS50862">
    <property type="entry name" value="AA_TRNA_LIGASE_II"/>
    <property type="match status" value="1"/>
</dbReference>
<dbReference type="PROSITE" id="PS51880">
    <property type="entry name" value="TGS"/>
    <property type="match status" value="1"/>
</dbReference>
<feature type="chain" id="PRO_1000020520" description="Threonine--tRNA ligase">
    <location>
        <begin position="1"/>
        <end position="645"/>
    </location>
</feature>
<feature type="domain" description="TGS" evidence="2">
    <location>
        <begin position="1"/>
        <end position="63"/>
    </location>
</feature>
<feature type="region of interest" description="Catalytic" evidence="1">
    <location>
        <begin position="242"/>
        <end position="540"/>
    </location>
</feature>
<feature type="binding site" evidence="1">
    <location>
        <position position="336"/>
    </location>
    <ligand>
        <name>Zn(2+)</name>
        <dbReference type="ChEBI" id="CHEBI:29105"/>
    </ligand>
</feature>
<feature type="binding site" evidence="1">
    <location>
        <position position="387"/>
    </location>
    <ligand>
        <name>Zn(2+)</name>
        <dbReference type="ChEBI" id="CHEBI:29105"/>
    </ligand>
</feature>
<feature type="binding site" evidence="1">
    <location>
        <position position="517"/>
    </location>
    <ligand>
        <name>Zn(2+)</name>
        <dbReference type="ChEBI" id="CHEBI:29105"/>
    </ligand>
</feature>
<comment type="function">
    <text evidence="1">Catalyzes the attachment of threonine to tRNA(Thr) in a two-step reaction: L-threonine is first activated by ATP to form Thr-AMP and then transferred to the acceptor end of tRNA(Thr). Also edits incorrectly charged L-seryl-tRNA(Thr).</text>
</comment>
<comment type="catalytic activity">
    <reaction evidence="1">
        <text>tRNA(Thr) + L-threonine + ATP = L-threonyl-tRNA(Thr) + AMP + diphosphate + H(+)</text>
        <dbReference type="Rhea" id="RHEA:24624"/>
        <dbReference type="Rhea" id="RHEA-COMP:9670"/>
        <dbReference type="Rhea" id="RHEA-COMP:9704"/>
        <dbReference type="ChEBI" id="CHEBI:15378"/>
        <dbReference type="ChEBI" id="CHEBI:30616"/>
        <dbReference type="ChEBI" id="CHEBI:33019"/>
        <dbReference type="ChEBI" id="CHEBI:57926"/>
        <dbReference type="ChEBI" id="CHEBI:78442"/>
        <dbReference type="ChEBI" id="CHEBI:78534"/>
        <dbReference type="ChEBI" id="CHEBI:456215"/>
        <dbReference type="EC" id="6.1.1.3"/>
    </reaction>
</comment>
<comment type="cofactor">
    <cofactor evidence="1">
        <name>Zn(2+)</name>
        <dbReference type="ChEBI" id="CHEBI:29105"/>
    </cofactor>
    <text evidence="1">Binds 1 zinc ion per subunit.</text>
</comment>
<comment type="subunit">
    <text evidence="1">Homodimer.</text>
</comment>
<comment type="subcellular location">
    <subcellularLocation>
        <location evidence="1">Cytoplasm</location>
    </subcellularLocation>
</comment>
<comment type="similarity">
    <text evidence="1">Belongs to the class-II aminoacyl-tRNA synthetase family.</text>
</comment>
<evidence type="ECO:0000255" key="1">
    <source>
        <dbReference type="HAMAP-Rule" id="MF_00184"/>
    </source>
</evidence>
<evidence type="ECO:0000255" key="2">
    <source>
        <dbReference type="PROSITE-ProRule" id="PRU01228"/>
    </source>
</evidence>
<sequence>MEQINIQFPDGNKKAFDKGTTTEDIAQSISPGLRKKAVAGKFNGQLVDLTKPLETDGSIEIVTPGSEEALEVLRHSTAHLMAHAIKRLYGNVKFGVGPVIEGGFYYDFDIDQNISSDDFEQIEKTMKQIVNENMKIERKVVSRDEAKELFSNDEYKLELIDAIPEDENVTLYSQGDFTDLCRGVHVPSTAKIKEFKLLSTAGAYWRGDSNNKMLQRIYGTAFFDKKELKAHLQMLEERKERDHRKIGKELELFTNSQLVGAGLPLWLPNGATIRREIERYIVDKEVSMGYDHVYTPVLANVDLYKTSGHWDHYQEDMFPPMQLDETESMVLRPMNCPHHMMIYANKPHSYRELPIRIAELGTMHRYEASGAVSGLQRVRGMTLNDSHIFVRPDQIKEEFKRVVNMIIDVYKDFGFEDYSFRLSYRDPEDKEKYFDDDDMWNKAENMLKEAADELGLSYEEAIGEAAFYGPKLDVQVKTAMGKEETLSTAQLDFLLPERFDLTYIGQDGEHHRPVVIHRGVVSTMERFVAFLTEETKGAFPTWLAPKQVQIIPVNVDLHYDYARQLQDELKSQGVRVSIDDRNEKMGYKIREAQMQKIPYQIVVGDKEVENNQVNVRQYGSQDQETVEKDEFIWNLVDEIRLKKHR</sequence>
<keyword id="KW-0030">Aminoacyl-tRNA synthetase</keyword>
<keyword id="KW-0067">ATP-binding</keyword>
<keyword id="KW-0963">Cytoplasm</keyword>
<keyword id="KW-0436">Ligase</keyword>
<keyword id="KW-0479">Metal-binding</keyword>
<keyword id="KW-0547">Nucleotide-binding</keyword>
<keyword id="KW-0648">Protein biosynthesis</keyword>
<keyword id="KW-0694">RNA-binding</keyword>
<keyword id="KW-0820">tRNA-binding</keyword>
<keyword id="KW-0862">Zinc</keyword>